<dbReference type="EMBL" id="AC007651">
    <property type="protein sequence ID" value="AAD50010.1"/>
    <property type="molecule type" value="Genomic_DNA"/>
</dbReference>
<dbReference type="EMBL" id="CP002684">
    <property type="protein sequence ID" value="AEE29564.1"/>
    <property type="molecule type" value="Genomic_DNA"/>
</dbReference>
<dbReference type="EMBL" id="AK226786">
    <property type="protein sequence ID" value="BAE98884.1"/>
    <property type="status" value="ALT_SEQ"/>
    <property type="molecule type" value="mRNA"/>
</dbReference>
<dbReference type="PIR" id="G86308">
    <property type="entry name" value="G86308"/>
</dbReference>
<dbReference type="RefSeq" id="NP_173168.1">
    <property type="nucleotide sequence ID" value="NM_101586.1"/>
</dbReference>
<dbReference type="SMR" id="Q9SHI4"/>
<dbReference type="STRING" id="3702.Q9SHI4"/>
<dbReference type="GlyCosmos" id="Q9SHI4">
    <property type="glycosylation" value="14 sites, No reported glycans"/>
</dbReference>
<dbReference type="GlyGen" id="Q9SHI4">
    <property type="glycosylation" value="14 sites"/>
</dbReference>
<dbReference type="PaxDb" id="3702-AT1G17250.1"/>
<dbReference type="EnsemblPlants" id="AT1G17250.1">
    <property type="protein sequence ID" value="AT1G17250.1"/>
    <property type="gene ID" value="AT1G17250"/>
</dbReference>
<dbReference type="GeneID" id="838296"/>
<dbReference type="Gramene" id="AT1G17250.1">
    <property type="protein sequence ID" value="AT1G17250.1"/>
    <property type="gene ID" value="AT1G17250"/>
</dbReference>
<dbReference type="KEGG" id="ath:AT1G17250"/>
<dbReference type="Araport" id="AT1G17250"/>
<dbReference type="TAIR" id="AT1G17250">
    <property type="gene designation" value="RLP3"/>
</dbReference>
<dbReference type="eggNOG" id="KOG0619">
    <property type="taxonomic scope" value="Eukaryota"/>
</dbReference>
<dbReference type="HOGENOM" id="CLU_000288_22_9_1"/>
<dbReference type="InParanoid" id="Q9SHI4"/>
<dbReference type="OMA" id="PSFMCKS"/>
<dbReference type="PhylomeDB" id="Q9SHI4"/>
<dbReference type="PRO" id="PR:Q9SHI4"/>
<dbReference type="Proteomes" id="UP000006548">
    <property type="component" value="Chromosome 1"/>
</dbReference>
<dbReference type="ExpressionAtlas" id="Q9SHI4">
    <property type="expression patterns" value="differential"/>
</dbReference>
<dbReference type="GO" id="GO:0005886">
    <property type="term" value="C:plasma membrane"/>
    <property type="evidence" value="ECO:0007669"/>
    <property type="project" value="UniProtKB-SubCell"/>
</dbReference>
<dbReference type="GO" id="GO:0050832">
    <property type="term" value="P:defense response to fungus"/>
    <property type="evidence" value="ECO:0000314"/>
    <property type="project" value="UniProtKB"/>
</dbReference>
<dbReference type="GO" id="GO:0045087">
    <property type="term" value="P:innate immune response"/>
    <property type="evidence" value="ECO:0000315"/>
    <property type="project" value="TAIR"/>
</dbReference>
<dbReference type="GO" id="GO:0010073">
    <property type="term" value="P:meristem maintenance"/>
    <property type="evidence" value="ECO:0000250"/>
    <property type="project" value="UniProtKB"/>
</dbReference>
<dbReference type="GO" id="GO:0009620">
    <property type="term" value="P:response to fungus"/>
    <property type="evidence" value="ECO:0000315"/>
    <property type="project" value="TAIR"/>
</dbReference>
<dbReference type="FunFam" id="3.80.10.10:FF:000095">
    <property type="entry name" value="LRR receptor-like serine/threonine-protein kinase GSO1"/>
    <property type="match status" value="1"/>
</dbReference>
<dbReference type="FunFam" id="3.80.10.10:FF:000403">
    <property type="entry name" value="Receptor-like protein 2"/>
    <property type="match status" value="1"/>
</dbReference>
<dbReference type="FunFam" id="3.80.10.10:FF:000213">
    <property type="entry name" value="Tyrosine-sulfated glycopeptide receptor 1"/>
    <property type="match status" value="1"/>
</dbReference>
<dbReference type="Gene3D" id="3.80.10.10">
    <property type="entry name" value="Ribonuclease Inhibitor"/>
    <property type="match status" value="4"/>
</dbReference>
<dbReference type="InterPro" id="IPR053211">
    <property type="entry name" value="DNA_repair-toleration"/>
</dbReference>
<dbReference type="InterPro" id="IPR001611">
    <property type="entry name" value="Leu-rich_rpt"/>
</dbReference>
<dbReference type="InterPro" id="IPR003591">
    <property type="entry name" value="Leu-rich_rpt_typical-subtyp"/>
</dbReference>
<dbReference type="InterPro" id="IPR032675">
    <property type="entry name" value="LRR_dom_sf"/>
</dbReference>
<dbReference type="InterPro" id="IPR013210">
    <property type="entry name" value="LRR_N_plant-typ"/>
</dbReference>
<dbReference type="PANTHER" id="PTHR48060">
    <property type="entry name" value="DNA DAMAGE-REPAIR/TOLERATION PROTEIN DRT100"/>
    <property type="match status" value="1"/>
</dbReference>
<dbReference type="PANTHER" id="PTHR48060:SF21">
    <property type="entry name" value="L DOMAIN-LIKE PROTEIN"/>
    <property type="match status" value="1"/>
</dbReference>
<dbReference type="Pfam" id="PF00560">
    <property type="entry name" value="LRR_1"/>
    <property type="match status" value="6"/>
</dbReference>
<dbReference type="Pfam" id="PF13855">
    <property type="entry name" value="LRR_8"/>
    <property type="match status" value="1"/>
</dbReference>
<dbReference type="Pfam" id="PF08263">
    <property type="entry name" value="LRRNT_2"/>
    <property type="match status" value="1"/>
</dbReference>
<dbReference type="PRINTS" id="PR00019">
    <property type="entry name" value="LEURICHRPT"/>
</dbReference>
<dbReference type="SMART" id="SM00369">
    <property type="entry name" value="LRR_TYP"/>
    <property type="match status" value="8"/>
</dbReference>
<dbReference type="SUPFAM" id="SSF52058">
    <property type="entry name" value="L domain-like"/>
    <property type="match status" value="2"/>
</dbReference>
<dbReference type="PROSITE" id="PS51450">
    <property type="entry name" value="LRR"/>
    <property type="match status" value="13"/>
</dbReference>
<feature type="signal peptide" evidence="10">
    <location>
        <begin position="1"/>
        <end position="50"/>
    </location>
</feature>
<feature type="chain" id="PRO_0000441618" description="Receptor-like protein 3">
    <location>
        <begin position="51"/>
        <end position="756"/>
    </location>
</feature>
<feature type="topological domain" description="Extracellular" evidence="2">
    <location>
        <begin position="51"/>
        <end position="725"/>
    </location>
</feature>
<feature type="transmembrane region" description="Helical" evidence="2">
    <location>
        <begin position="726"/>
        <end position="746"/>
    </location>
</feature>
<feature type="topological domain" description="Cytoplasmic" evidence="2">
    <location>
        <begin position="747"/>
        <end position="756"/>
    </location>
</feature>
<feature type="repeat" description="LRR 1" evidence="2">
    <location>
        <begin position="95"/>
        <end position="119"/>
    </location>
</feature>
<feature type="repeat" description="LRR 2" evidence="2">
    <location>
        <begin position="120"/>
        <end position="143"/>
    </location>
</feature>
<feature type="repeat" description="LRR 3" evidence="2">
    <location>
        <begin position="145"/>
        <end position="169"/>
    </location>
</feature>
<feature type="repeat" description="LRR 4" evidence="2">
    <location>
        <begin position="174"/>
        <end position="199"/>
    </location>
</feature>
<feature type="repeat" description="LRR 5" evidence="2">
    <location>
        <begin position="201"/>
        <end position="225"/>
    </location>
</feature>
<feature type="repeat" description="LRR 6" evidence="2">
    <location>
        <begin position="226"/>
        <end position="250"/>
    </location>
</feature>
<feature type="repeat" description="LRR 7" evidence="2">
    <location>
        <begin position="252"/>
        <end position="274"/>
    </location>
</feature>
<feature type="repeat" description="LRR 8" evidence="2">
    <location>
        <begin position="275"/>
        <end position="298"/>
    </location>
</feature>
<feature type="repeat" description="LRR 9" evidence="2">
    <location>
        <begin position="299"/>
        <end position="322"/>
    </location>
</feature>
<feature type="repeat" description="LRR 10" evidence="2">
    <location>
        <begin position="323"/>
        <end position="346"/>
    </location>
</feature>
<feature type="repeat" description="LRR 11" evidence="2">
    <location>
        <begin position="348"/>
        <end position="370"/>
    </location>
</feature>
<feature type="repeat" description="LRR 12" evidence="2">
    <location>
        <begin position="371"/>
        <end position="395"/>
    </location>
</feature>
<feature type="repeat" description="LRR 13" evidence="2">
    <location>
        <begin position="397"/>
        <end position="419"/>
    </location>
</feature>
<feature type="repeat" description="LRR 14" evidence="2">
    <location>
        <begin position="420"/>
        <end position="443"/>
    </location>
</feature>
<feature type="repeat" description="LRR 15" evidence="2">
    <location>
        <begin position="445"/>
        <end position="471"/>
    </location>
</feature>
<feature type="repeat" description="LRR 16" evidence="2">
    <location>
        <begin position="474"/>
        <end position="498"/>
    </location>
</feature>
<feature type="repeat" description="LRR 17" evidence="2">
    <location>
        <begin position="499"/>
        <end position="521"/>
    </location>
</feature>
<feature type="repeat" description="LRR 18" evidence="2">
    <location>
        <begin position="522"/>
        <end position="546"/>
    </location>
</feature>
<feature type="repeat" description="LRR 19; degenerate" evidence="9">
    <location>
        <begin position="548"/>
        <end position="569"/>
    </location>
</feature>
<feature type="repeat" description="LRR 20" evidence="2">
    <location>
        <begin position="570"/>
        <end position="593"/>
    </location>
</feature>
<feature type="repeat" description="LRR 21" evidence="2">
    <location>
        <begin position="608"/>
        <end position="631"/>
    </location>
</feature>
<feature type="repeat" description="LRR 22" evidence="2">
    <location>
        <begin position="632"/>
        <end position="656"/>
    </location>
</feature>
<feature type="repeat" description="LRR 23" evidence="2">
    <location>
        <begin position="658"/>
        <end position="681"/>
    </location>
</feature>
<feature type="region of interest" description="N-cap" evidence="10">
    <location>
        <begin position="51"/>
        <end position="88"/>
    </location>
</feature>
<feature type="region of interest" description="C-cap/acidic domain" evidence="10">
    <location>
        <begin position="699"/>
        <end position="725"/>
    </location>
</feature>
<feature type="glycosylation site" description="N-linked (GlcNAc...) asparagine" evidence="3">
    <location>
        <position position="66"/>
    </location>
</feature>
<feature type="glycosylation site" description="N-linked (GlcNAc...) asparagine" evidence="3">
    <location>
        <position position="126"/>
    </location>
</feature>
<feature type="glycosylation site" description="N-linked (GlcNAc...) asparagine" evidence="3">
    <location>
        <position position="169"/>
    </location>
</feature>
<feature type="glycosylation site" description="N-linked (GlcNAc...) asparagine" evidence="3">
    <location>
        <position position="208"/>
    </location>
</feature>
<feature type="glycosylation site" description="N-linked (GlcNAc...) asparagine" evidence="3">
    <location>
        <position position="262"/>
    </location>
</feature>
<feature type="glycosylation site" description="N-linked (GlcNAc...) asparagine" evidence="3">
    <location>
        <position position="273"/>
    </location>
</feature>
<feature type="glycosylation site" description="N-linked (GlcNAc...) asparagine" evidence="3">
    <location>
        <position position="334"/>
    </location>
</feature>
<feature type="glycosylation site" description="N-linked (GlcNAc...) asparagine" evidence="3">
    <location>
        <position position="345"/>
    </location>
</feature>
<feature type="glycosylation site" description="N-linked (GlcNAc...) asparagine" evidence="3">
    <location>
        <position position="381"/>
    </location>
</feature>
<feature type="glycosylation site" description="N-linked (GlcNAc...) asparagine" evidence="3">
    <location>
        <position position="434"/>
    </location>
</feature>
<feature type="glycosylation site" description="N-linked (GlcNAc...) asparagine" evidence="3">
    <location>
        <position position="447"/>
    </location>
</feature>
<feature type="glycosylation site" description="N-linked (GlcNAc...) asparagine" evidence="3">
    <location>
        <position position="459"/>
    </location>
</feature>
<feature type="glycosylation site" description="N-linked (GlcNAc...) asparagine" evidence="3">
    <location>
        <position position="573"/>
    </location>
</feature>
<feature type="glycosylation site" description="N-linked (GlcNAc...) asparagine" evidence="3">
    <location>
        <position position="666"/>
    </location>
</feature>
<organism>
    <name type="scientific">Arabidopsis thaliana</name>
    <name type="common">Mouse-ear cress</name>
    <dbReference type="NCBI Taxonomy" id="3702"/>
    <lineage>
        <taxon>Eukaryota</taxon>
        <taxon>Viridiplantae</taxon>
        <taxon>Streptophyta</taxon>
        <taxon>Embryophyta</taxon>
        <taxon>Tracheophyta</taxon>
        <taxon>Spermatophyta</taxon>
        <taxon>Magnoliopsida</taxon>
        <taxon>eudicotyledons</taxon>
        <taxon>Gunneridae</taxon>
        <taxon>Pentapetalae</taxon>
        <taxon>rosids</taxon>
        <taxon>malvids</taxon>
        <taxon>Brassicales</taxon>
        <taxon>Brassicaceae</taxon>
        <taxon>Camelineae</taxon>
        <taxon>Arabidopsis</taxon>
    </lineage>
</organism>
<protein>
    <recommendedName>
        <fullName evidence="8">Receptor-like protein 3</fullName>
        <shortName evidence="8">AtRLP3</shortName>
    </recommendedName>
    <alternativeName>
        <fullName evidence="7">Protein RESISTANCE TO FUSARIUM OXYSPORUM 2</fullName>
    </alternativeName>
</protein>
<reference key="1">
    <citation type="journal article" date="2000" name="Nature">
        <title>Sequence and analysis of chromosome 1 of the plant Arabidopsis thaliana.</title>
        <authorList>
            <person name="Theologis A."/>
            <person name="Ecker J.R."/>
            <person name="Palm C.J."/>
            <person name="Federspiel N.A."/>
            <person name="Kaul S."/>
            <person name="White O."/>
            <person name="Alonso J."/>
            <person name="Altafi H."/>
            <person name="Araujo R."/>
            <person name="Bowman C.L."/>
            <person name="Brooks S.Y."/>
            <person name="Buehler E."/>
            <person name="Chan A."/>
            <person name="Chao Q."/>
            <person name="Chen H."/>
            <person name="Cheuk R.F."/>
            <person name="Chin C.W."/>
            <person name="Chung M.K."/>
            <person name="Conn L."/>
            <person name="Conway A.B."/>
            <person name="Conway A.R."/>
            <person name="Creasy T.H."/>
            <person name="Dewar K."/>
            <person name="Dunn P."/>
            <person name="Etgu P."/>
            <person name="Feldblyum T.V."/>
            <person name="Feng J.-D."/>
            <person name="Fong B."/>
            <person name="Fujii C.Y."/>
            <person name="Gill J.E."/>
            <person name="Goldsmith A.D."/>
            <person name="Haas B."/>
            <person name="Hansen N.F."/>
            <person name="Hughes B."/>
            <person name="Huizar L."/>
            <person name="Hunter J.L."/>
            <person name="Jenkins J."/>
            <person name="Johnson-Hopson C."/>
            <person name="Khan S."/>
            <person name="Khaykin E."/>
            <person name="Kim C.J."/>
            <person name="Koo H.L."/>
            <person name="Kremenetskaia I."/>
            <person name="Kurtz D.B."/>
            <person name="Kwan A."/>
            <person name="Lam B."/>
            <person name="Langin-Hooper S."/>
            <person name="Lee A."/>
            <person name="Lee J.M."/>
            <person name="Lenz C.A."/>
            <person name="Li J.H."/>
            <person name="Li Y.-P."/>
            <person name="Lin X."/>
            <person name="Liu S.X."/>
            <person name="Liu Z.A."/>
            <person name="Luros J.S."/>
            <person name="Maiti R."/>
            <person name="Marziali A."/>
            <person name="Militscher J."/>
            <person name="Miranda M."/>
            <person name="Nguyen M."/>
            <person name="Nierman W.C."/>
            <person name="Osborne B.I."/>
            <person name="Pai G."/>
            <person name="Peterson J."/>
            <person name="Pham P.K."/>
            <person name="Rizzo M."/>
            <person name="Rooney T."/>
            <person name="Rowley D."/>
            <person name="Sakano H."/>
            <person name="Salzberg S.L."/>
            <person name="Schwartz J.R."/>
            <person name="Shinn P."/>
            <person name="Southwick A.M."/>
            <person name="Sun H."/>
            <person name="Tallon L.J."/>
            <person name="Tambunga G."/>
            <person name="Toriumi M.J."/>
            <person name="Town C.D."/>
            <person name="Utterback T."/>
            <person name="Van Aken S."/>
            <person name="Vaysberg M."/>
            <person name="Vysotskaia V.S."/>
            <person name="Walker M."/>
            <person name="Wu D."/>
            <person name="Yu G."/>
            <person name="Fraser C.M."/>
            <person name="Venter J.C."/>
            <person name="Davis R.W."/>
        </authorList>
    </citation>
    <scope>NUCLEOTIDE SEQUENCE [LARGE SCALE GENOMIC DNA]</scope>
    <source>
        <strain>cv. Columbia</strain>
    </source>
</reference>
<reference key="2">
    <citation type="journal article" date="2017" name="Plant J.">
        <title>Araport11: a complete reannotation of the Arabidopsis thaliana reference genome.</title>
        <authorList>
            <person name="Cheng C.Y."/>
            <person name="Krishnakumar V."/>
            <person name="Chan A.P."/>
            <person name="Thibaud-Nissen F."/>
            <person name="Schobel S."/>
            <person name="Town C.D."/>
        </authorList>
    </citation>
    <scope>GENOME REANNOTATION</scope>
    <source>
        <strain>cv. Columbia</strain>
    </source>
</reference>
<reference key="3">
    <citation type="submission" date="2006-07" db="EMBL/GenBank/DDBJ databases">
        <title>Large-scale analysis of RIKEN Arabidopsis full-length (RAFL) cDNAs.</title>
        <authorList>
            <person name="Totoki Y."/>
            <person name="Seki M."/>
            <person name="Ishida J."/>
            <person name="Nakajima M."/>
            <person name="Enju A."/>
            <person name="Kamiya A."/>
            <person name="Narusaka M."/>
            <person name="Shin-i T."/>
            <person name="Nakagawa M."/>
            <person name="Sakamoto N."/>
            <person name="Oishi K."/>
            <person name="Kohara Y."/>
            <person name="Kobayashi M."/>
            <person name="Toyoda A."/>
            <person name="Sakaki Y."/>
            <person name="Sakurai T."/>
            <person name="Iida K."/>
            <person name="Akiyama K."/>
            <person name="Satou M."/>
            <person name="Toyoda T."/>
            <person name="Konagaya A."/>
            <person name="Carninci P."/>
            <person name="Kawai J."/>
            <person name="Hayashizaki Y."/>
            <person name="Shinozaki K."/>
        </authorList>
    </citation>
    <scope>NUCLEOTIDE SEQUENCE [LARGE SCALE MRNA] OF 1-647</scope>
    <source>
        <strain>cv. Columbia</strain>
    </source>
</reference>
<reference key="4">
    <citation type="journal article" date="2005" name="Genetics">
        <title>RESISTANCE TO FUSARIUM OXYSPORUM 1, a dominant Arabidopsis disease-resistance gene, is not race specific.</title>
        <authorList>
            <person name="Diener A.C."/>
            <person name="Ausubel F.M."/>
        </authorList>
    </citation>
    <scope>FUNCTION</scope>
    <scope>GENE FAMILY</scope>
    <source>
        <strain>cv. Columbia</strain>
        <strain>cv. Ty-0</strain>
    </source>
</reference>
<reference key="5">
    <citation type="journal article" date="2005" name="Plant Physiol.">
        <title>Phylogenomic analysis of the receptor-like proteins of rice and Arabidopsis.</title>
        <authorList>
            <person name="Fritz-Laylin L.K."/>
            <person name="Krishnamurthy N."/>
            <person name="Toer M."/>
            <person name="Sjoelander K.V."/>
            <person name="Jones J.D."/>
        </authorList>
    </citation>
    <scope>GENE FAMILY</scope>
</reference>
<reference key="6">
    <citation type="journal article" date="2008" name="Plant Physiol.">
        <title>A genome-wide functional investigation into the roles of receptor-like proteins in Arabidopsis.</title>
        <authorList>
            <person name="Wang G."/>
            <person name="Ellendorff U."/>
            <person name="Kemp B."/>
            <person name="Mansfield J.W."/>
            <person name="Forsyth A."/>
            <person name="Mitchell K."/>
            <person name="Bastas K."/>
            <person name="Liu C.-M."/>
            <person name="Woods-Toer A."/>
            <person name="Zipfel C."/>
            <person name="de Wit P.J.G.M."/>
            <person name="Jones J.D.G."/>
            <person name="Toer M."/>
            <person name="Thomma B.P.H.J."/>
        </authorList>
    </citation>
    <scope>GENE FAMILY</scope>
    <scope>NOMENCLATURE</scope>
</reference>
<reference key="7">
    <citation type="journal article" date="2010" name="Plant Physiol.">
        <title>Functional analyses of the CLAVATA2-like proteins and their domains that contribute to CLAVATA2 specificity.</title>
        <authorList>
            <person name="Wang G."/>
            <person name="Long Y."/>
            <person name="Thomma B.P.H.J."/>
            <person name="de Wit P.J.G.M."/>
            <person name="Angenent G.C."/>
            <person name="Fiers M."/>
        </authorList>
    </citation>
    <scope>TISSUE SPECIFICITY</scope>
</reference>
<reference key="8">
    <citation type="journal article" date="2013" name="PLoS Genet.">
        <title>Arabidopsis thaliana resistance to fusarium oxysporum 2 implicates tyrosine-sulfated peptide signaling in susceptibility and resistance to root infection.</title>
        <authorList>
            <person name="Shen Y."/>
            <person name="Diener A.C."/>
        </authorList>
    </citation>
    <scope>FUNCTION</scope>
    <scope>DISRUPTION PHENOTYPE</scope>
    <source>
        <strain>cv. Columbia</strain>
        <strain>cv. Ty-0</strain>
    </source>
</reference>
<gene>
    <name evidence="8" type="primary">RLP3</name>
    <name evidence="7" type="synonym">RFO2</name>
    <name evidence="11" type="ordered locus">At1g17250</name>
    <name evidence="12" type="ORF">F20D23.5</name>
</gene>
<proteinExistence type="evidence at transcript level"/>
<evidence type="ECO:0000250" key="1">
    <source>
        <dbReference type="UniProtKB" id="Q9SHI3"/>
    </source>
</evidence>
<evidence type="ECO:0000255" key="2"/>
<evidence type="ECO:0000255" key="3">
    <source>
        <dbReference type="PROSITE-ProRule" id="PRU00498"/>
    </source>
</evidence>
<evidence type="ECO:0000269" key="4">
    <source>
    </source>
</evidence>
<evidence type="ECO:0000269" key="5">
    <source>
    </source>
</evidence>
<evidence type="ECO:0000269" key="6">
    <source>
    </source>
</evidence>
<evidence type="ECO:0000303" key="7">
    <source>
    </source>
</evidence>
<evidence type="ECO:0000303" key="8">
    <source>
    </source>
</evidence>
<evidence type="ECO:0000305" key="9"/>
<evidence type="ECO:0000305" key="10">
    <source>
    </source>
</evidence>
<evidence type="ECO:0000312" key="11">
    <source>
        <dbReference type="Araport" id="AT1G17250"/>
    </source>
</evidence>
<evidence type="ECO:0000312" key="12">
    <source>
        <dbReference type="EMBL" id="AAD50010.1"/>
    </source>
</evidence>
<name>RLP3_ARATH</name>
<sequence length="756" mass="83640">MTNEGRFKAKGFVRTSSTTRPIQALSFHMIGILLQCVLFISVLSIAVSEALCNSQDRESLLWFSGNVSSSVSPLNWNPSIDCCSWEGITCDDSPDSHITAISLPFRALYGKLPLSVLRLHHLSQLNLSHNRLSGHLPSGFLSALDQLKVLDLSYNSLDGELPVEQTFRNGSNRCFPIRIVDLSSNFLQGEILPSSIFMQGTFDLISFNVSKNSFTGSIPSFMCKSSPQLSKLDFSYNDFTGNIPQGLGRCLKLSVLQAGFNNISGEIPSDIYNLSELEQLFLPVNHLSGKINDDITHLTKLKSLELYSNHLGGEIPMDIGQLSRLQSLQLHINNITGTVPPSLANCTNLVKLNLRLNRLEGTLSELDFSRFQSLSILDLGNNSFSGDFPWRVHSCKSLSAMRFASNKLTGQISPHVLELESLSILSLSDNKLMNITGALGILQGCRNLSTLLIGKNFYNETFPSDKDLISSDGFPNLQIFASGGSGLRGEIPAWLIKLKSLAVIDLSHNQLVGSIPGWLGTFPHLFYIDLSENLLSGELPKDLFQLKALMSQKAYDATERNYLKLPVFVSPNNVTTHQQYNQLFSLPPGIYIRRNNLKGSIPIEVGQLKVLHVLELSHNYLSGIIPHELSKLTSLERLDLSNNHLSGRIPWSLTSLHYMSYFNVVNNSLDGPIPTGSQFDTFPQANFKGNPLLCGGILLTSCKASTKLPATTTNKADTEDEEELKFIFILGVATGFFVSYCFYWCFFARLDAFISK</sequence>
<accession>Q9SHI4</accession>
<accession>Q0WVG4</accession>
<keyword id="KW-1003">Cell membrane</keyword>
<keyword id="KW-0325">Glycoprotein</keyword>
<keyword id="KW-0433">Leucine-rich repeat</keyword>
<keyword id="KW-0472">Membrane</keyword>
<keyword id="KW-0611">Plant defense</keyword>
<keyword id="KW-0675">Receptor</keyword>
<keyword id="KW-1185">Reference proteome</keyword>
<keyword id="KW-0677">Repeat</keyword>
<keyword id="KW-0732">Signal</keyword>
<keyword id="KW-0812">Transmembrane</keyword>
<keyword id="KW-1133">Transmembrane helix</keyword>
<comment type="function">
    <text evidence="1 4 6">Involved in the perception of CLV3 and CLV3-like peptides, that act as extracellular signals regulating meristems maintenance (By similarity). Contributes, with WAKL22/RFO1, to resistance to F.oxysporum (f.) matthioli in cv. Columbia relative to cv. Ty-0 (PubMed:15965251, PubMed:23717215).</text>
</comment>
<comment type="subcellular location">
    <subcellularLocation>
        <location evidence="9">Cell membrane</location>
        <topology evidence="9">Single-pass type I membrane protein</topology>
    </subcellularLocation>
</comment>
<comment type="tissue specificity">
    <text evidence="5">Expressed at very low levels in the shoot apex.</text>
</comment>
<comment type="disruption phenotype">
    <text evidence="6">Normal resistance to F.oxysporum (f.) matthioli in cv. Columbia. The double mutant rfo1 rfo2 is strongly susceptible to F.oxysporum.</text>
</comment>
<comment type="similarity">
    <text evidence="9">Belongs to the RLP family.</text>
</comment>
<comment type="sequence caution" evidence="9">
    <conflict type="erroneous translation">
        <sequence resource="EMBL-CDS" id="BAE98884"/>
    </conflict>
    <text>Wrong choice of frame.</text>
</comment>